<comment type="function">
    <text evidence="1">Catalyzes the 2-thiolation of uridine at the wobble position (U34) of tRNA, leading to the formation of s(2)U34.</text>
</comment>
<comment type="catalytic activity">
    <reaction evidence="1">
        <text>S-sulfanyl-L-cysteinyl-[protein] + uridine(34) in tRNA + AH2 + ATP = 2-thiouridine(34) in tRNA + L-cysteinyl-[protein] + A + AMP + diphosphate + H(+)</text>
        <dbReference type="Rhea" id="RHEA:47032"/>
        <dbReference type="Rhea" id="RHEA-COMP:10131"/>
        <dbReference type="Rhea" id="RHEA-COMP:11726"/>
        <dbReference type="Rhea" id="RHEA-COMP:11727"/>
        <dbReference type="Rhea" id="RHEA-COMP:11728"/>
        <dbReference type="ChEBI" id="CHEBI:13193"/>
        <dbReference type="ChEBI" id="CHEBI:15378"/>
        <dbReference type="ChEBI" id="CHEBI:17499"/>
        <dbReference type="ChEBI" id="CHEBI:29950"/>
        <dbReference type="ChEBI" id="CHEBI:30616"/>
        <dbReference type="ChEBI" id="CHEBI:33019"/>
        <dbReference type="ChEBI" id="CHEBI:61963"/>
        <dbReference type="ChEBI" id="CHEBI:65315"/>
        <dbReference type="ChEBI" id="CHEBI:87170"/>
        <dbReference type="ChEBI" id="CHEBI:456215"/>
        <dbReference type="EC" id="2.8.1.13"/>
    </reaction>
</comment>
<comment type="subcellular location">
    <subcellularLocation>
        <location evidence="1">Cytoplasm</location>
    </subcellularLocation>
</comment>
<comment type="similarity">
    <text evidence="1">Belongs to the MnmA/TRMU family.</text>
</comment>
<reference key="1">
    <citation type="journal article" date="2010" name="Genome Biol. Evol.">
        <title>Continuing evolution of Burkholderia mallei through genome reduction and large-scale rearrangements.</title>
        <authorList>
            <person name="Losada L."/>
            <person name="Ronning C.M."/>
            <person name="DeShazer D."/>
            <person name="Woods D."/>
            <person name="Fedorova N."/>
            <person name="Kim H.S."/>
            <person name="Shabalina S.A."/>
            <person name="Pearson T.R."/>
            <person name="Brinkac L."/>
            <person name="Tan P."/>
            <person name="Nandi T."/>
            <person name="Crabtree J."/>
            <person name="Badger J."/>
            <person name="Beckstrom-Sternberg S."/>
            <person name="Saqib M."/>
            <person name="Schutzer S.E."/>
            <person name="Keim P."/>
            <person name="Nierman W.C."/>
        </authorList>
    </citation>
    <scope>NUCLEOTIDE SEQUENCE [LARGE SCALE GENOMIC DNA]</scope>
    <source>
        <strain>SAVP1</strain>
    </source>
</reference>
<protein>
    <recommendedName>
        <fullName evidence="1">tRNA-specific 2-thiouridylase MnmA</fullName>
        <ecNumber evidence="1">2.8.1.13</ecNumber>
    </recommendedName>
</protein>
<keyword id="KW-0067">ATP-binding</keyword>
<keyword id="KW-0963">Cytoplasm</keyword>
<keyword id="KW-1015">Disulfide bond</keyword>
<keyword id="KW-0547">Nucleotide-binding</keyword>
<keyword id="KW-0694">RNA-binding</keyword>
<keyword id="KW-0808">Transferase</keyword>
<keyword id="KW-0819">tRNA processing</keyword>
<keyword id="KW-0820">tRNA-binding</keyword>
<gene>
    <name evidence="1" type="primary">mnmA</name>
    <name type="ordered locus">BMASAVP1_A0278</name>
</gene>
<evidence type="ECO:0000255" key="1">
    <source>
        <dbReference type="HAMAP-Rule" id="MF_00144"/>
    </source>
</evidence>
<dbReference type="EC" id="2.8.1.13" evidence="1"/>
<dbReference type="EMBL" id="CP000526">
    <property type="protein sequence ID" value="ABM51012.1"/>
    <property type="molecule type" value="Genomic_DNA"/>
</dbReference>
<dbReference type="RefSeq" id="WP_004194365.1">
    <property type="nucleotide sequence ID" value="NC_008785.1"/>
</dbReference>
<dbReference type="SMR" id="A1V076"/>
<dbReference type="GeneID" id="92980058"/>
<dbReference type="KEGG" id="bmv:BMASAVP1_A0278"/>
<dbReference type="HOGENOM" id="CLU_035188_1_0_4"/>
<dbReference type="GO" id="GO:0005737">
    <property type="term" value="C:cytoplasm"/>
    <property type="evidence" value="ECO:0007669"/>
    <property type="project" value="UniProtKB-SubCell"/>
</dbReference>
<dbReference type="GO" id="GO:0005524">
    <property type="term" value="F:ATP binding"/>
    <property type="evidence" value="ECO:0007669"/>
    <property type="project" value="UniProtKB-KW"/>
</dbReference>
<dbReference type="GO" id="GO:0000049">
    <property type="term" value="F:tRNA binding"/>
    <property type="evidence" value="ECO:0007669"/>
    <property type="project" value="UniProtKB-KW"/>
</dbReference>
<dbReference type="GO" id="GO:0103016">
    <property type="term" value="F:tRNA-uridine 2-sulfurtransferase activity"/>
    <property type="evidence" value="ECO:0007669"/>
    <property type="project" value="UniProtKB-EC"/>
</dbReference>
<dbReference type="GO" id="GO:0002143">
    <property type="term" value="P:tRNA wobble position uridine thiolation"/>
    <property type="evidence" value="ECO:0007669"/>
    <property type="project" value="TreeGrafter"/>
</dbReference>
<dbReference type="CDD" id="cd01998">
    <property type="entry name" value="MnmA_TRMU-like"/>
    <property type="match status" value="1"/>
</dbReference>
<dbReference type="FunFam" id="2.30.30.280:FF:000001">
    <property type="entry name" value="tRNA-specific 2-thiouridylase MnmA"/>
    <property type="match status" value="1"/>
</dbReference>
<dbReference type="FunFam" id="2.40.30.10:FF:000023">
    <property type="entry name" value="tRNA-specific 2-thiouridylase MnmA"/>
    <property type="match status" value="1"/>
</dbReference>
<dbReference type="FunFam" id="3.40.50.620:FF:000004">
    <property type="entry name" value="tRNA-specific 2-thiouridylase MnmA"/>
    <property type="match status" value="1"/>
</dbReference>
<dbReference type="Gene3D" id="2.30.30.280">
    <property type="entry name" value="Adenine nucleotide alpha hydrolases-like domains"/>
    <property type="match status" value="1"/>
</dbReference>
<dbReference type="Gene3D" id="3.40.50.620">
    <property type="entry name" value="HUPs"/>
    <property type="match status" value="1"/>
</dbReference>
<dbReference type="Gene3D" id="2.40.30.10">
    <property type="entry name" value="Translation factors"/>
    <property type="match status" value="1"/>
</dbReference>
<dbReference type="HAMAP" id="MF_00144">
    <property type="entry name" value="tRNA_thiouridyl_MnmA"/>
    <property type="match status" value="1"/>
</dbReference>
<dbReference type="InterPro" id="IPR004506">
    <property type="entry name" value="MnmA-like"/>
</dbReference>
<dbReference type="InterPro" id="IPR046885">
    <property type="entry name" value="MnmA-like_C"/>
</dbReference>
<dbReference type="InterPro" id="IPR046884">
    <property type="entry name" value="MnmA-like_central"/>
</dbReference>
<dbReference type="InterPro" id="IPR023382">
    <property type="entry name" value="MnmA-like_central_sf"/>
</dbReference>
<dbReference type="InterPro" id="IPR014729">
    <property type="entry name" value="Rossmann-like_a/b/a_fold"/>
</dbReference>
<dbReference type="NCBIfam" id="NF001138">
    <property type="entry name" value="PRK00143.1"/>
    <property type="match status" value="1"/>
</dbReference>
<dbReference type="NCBIfam" id="TIGR00420">
    <property type="entry name" value="trmU"/>
    <property type="match status" value="1"/>
</dbReference>
<dbReference type="PANTHER" id="PTHR11933:SF5">
    <property type="entry name" value="MITOCHONDRIAL TRNA-SPECIFIC 2-THIOURIDYLASE 1"/>
    <property type="match status" value="1"/>
</dbReference>
<dbReference type="PANTHER" id="PTHR11933">
    <property type="entry name" value="TRNA 5-METHYLAMINOMETHYL-2-THIOURIDYLATE -METHYLTRANSFERASE"/>
    <property type="match status" value="1"/>
</dbReference>
<dbReference type="Pfam" id="PF03054">
    <property type="entry name" value="tRNA_Me_trans"/>
    <property type="match status" value="1"/>
</dbReference>
<dbReference type="Pfam" id="PF20258">
    <property type="entry name" value="tRNA_Me_trans_C"/>
    <property type="match status" value="1"/>
</dbReference>
<dbReference type="Pfam" id="PF20259">
    <property type="entry name" value="tRNA_Me_trans_M"/>
    <property type="match status" value="1"/>
</dbReference>
<dbReference type="SUPFAM" id="SSF52402">
    <property type="entry name" value="Adenine nucleotide alpha hydrolases-like"/>
    <property type="match status" value="1"/>
</dbReference>
<accession>A1V076</accession>
<sequence length="383" mass="41858">MTKRRVVVGMSGGVDSSVTAWLLKEQGYDVVGLFMKNWEDDDDGEYCSTRQDWIDVVSVADLIGIDVEAVNFAAEYKDRVFAEFLREYSAGRTPNPDVLCNAEIKFKAFLDHAMSLGAQTIATGHYARVRERDGRFELLKAFDHTKDQSYFLHRLNQAQLSKTMFPLGEIPKTRVREIAAQIGLPNAKKKDSTGICFIGERPFRDFLNRYLPTKPGPMKTPDGKTVGEHIGLAFYTFGQRKGIGLGGSKDGSGEPWFVAVKDIASNTLYVVQGHDHPWLRSRELVAGNVSWVAGEPPADGARCGAKTRYRQADAPCAFGRAAQAGDERFSLVFDEPQWAVTPGQSAVLYDGDVCLGGGIIESAATGRAGTAPAGRAPALVEAR</sequence>
<organism>
    <name type="scientific">Burkholderia mallei (strain SAVP1)</name>
    <dbReference type="NCBI Taxonomy" id="320388"/>
    <lineage>
        <taxon>Bacteria</taxon>
        <taxon>Pseudomonadati</taxon>
        <taxon>Pseudomonadota</taxon>
        <taxon>Betaproteobacteria</taxon>
        <taxon>Burkholderiales</taxon>
        <taxon>Burkholderiaceae</taxon>
        <taxon>Burkholderia</taxon>
        <taxon>pseudomallei group</taxon>
    </lineage>
</organism>
<proteinExistence type="inferred from homology"/>
<name>MNMA_BURMS</name>
<feature type="chain" id="PRO_0000349556" description="tRNA-specific 2-thiouridylase MnmA">
    <location>
        <begin position="1"/>
        <end position="383"/>
    </location>
</feature>
<feature type="region of interest" description="Interaction with target base in tRNA" evidence="1">
    <location>
        <begin position="95"/>
        <end position="97"/>
    </location>
</feature>
<feature type="region of interest" description="Interaction with tRNA" evidence="1">
    <location>
        <begin position="146"/>
        <end position="148"/>
    </location>
</feature>
<feature type="region of interest" description="Interaction with tRNA" evidence="1">
    <location>
        <begin position="308"/>
        <end position="309"/>
    </location>
</feature>
<feature type="active site" description="Nucleophile" evidence="1">
    <location>
        <position position="100"/>
    </location>
</feature>
<feature type="active site" description="Cysteine persulfide intermediate" evidence="1">
    <location>
        <position position="196"/>
    </location>
</feature>
<feature type="binding site" evidence="1">
    <location>
        <begin position="9"/>
        <end position="16"/>
    </location>
    <ligand>
        <name>ATP</name>
        <dbReference type="ChEBI" id="CHEBI:30616"/>
    </ligand>
</feature>
<feature type="binding site" evidence="1">
    <location>
        <position position="35"/>
    </location>
    <ligand>
        <name>ATP</name>
        <dbReference type="ChEBI" id="CHEBI:30616"/>
    </ligand>
</feature>
<feature type="binding site" evidence="1">
    <location>
        <position position="124"/>
    </location>
    <ligand>
        <name>ATP</name>
        <dbReference type="ChEBI" id="CHEBI:30616"/>
    </ligand>
</feature>
<feature type="site" description="Interaction with tRNA" evidence="1">
    <location>
        <position position="125"/>
    </location>
</feature>
<feature type="site" description="Interaction with tRNA" evidence="1">
    <location>
        <position position="344"/>
    </location>
</feature>
<feature type="disulfide bond" description="Alternate" evidence="1">
    <location>
        <begin position="100"/>
        <end position="196"/>
    </location>
</feature>